<protein>
    <recommendedName>
        <fullName evidence="5">Flavin-dependent halogenase chlA</fullName>
        <ecNumber evidence="3">1.14.14.-</ecNumber>
    </recommendedName>
    <alternativeName>
        <fullName evidence="5">Chlorination protein A</fullName>
    </alternativeName>
</protein>
<evidence type="ECO:0000250" key="1">
    <source>
        <dbReference type="UniProtKB" id="P95480"/>
    </source>
</evidence>
<evidence type="ECO:0000269" key="2">
    <source>
    </source>
</evidence>
<evidence type="ECO:0000269" key="3">
    <source>
    </source>
</evidence>
<evidence type="ECO:0000269" key="4">
    <source>
    </source>
</evidence>
<evidence type="ECO:0000303" key="5">
    <source>
    </source>
</evidence>
<evidence type="ECO:0000305" key="6"/>
<evidence type="ECO:0000312" key="7">
    <source>
        <dbReference type="EMBL" id="EAL62046.1"/>
    </source>
</evidence>
<keyword id="KW-0274">FAD</keyword>
<keyword id="KW-0285">Flavoprotein</keyword>
<keyword id="KW-0503">Monooxygenase</keyword>
<keyword id="KW-0560">Oxidoreductase</keyword>
<proteinExistence type="evidence at protein level"/>
<reference key="1">
    <citation type="journal article" date="2005" name="Nature">
        <title>The genome of the social amoeba Dictyostelium discoideum.</title>
        <authorList>
            <person name="Eichinger L."/>
            <person name="Pachebat J.A."/>
            <person name="Gloeckner G."/>
            <person name="Rajandream M.A."/>
            <person name="Sucgang R."/>
            <person name="Berriman M."/>
            <person name="Song J."/>
            <person name="Olsen R."/>
            <person name="Szafranski K."/>
            <person name="Xu Q."/>
            <person name="Tunggal B."/>
            <person name="Kummerfeld S."/>
            <person name="Madera M."/>
            <person name="Konfortov B.A."/>
            <person name="Rivero F."/>
            <person name="Bankier A.T."/>
            <person name="Lehmann R."/>
            <person name="Hamlin N."/>
            <person name="Davies R."/>
            <person name="Gaudet P."/>
            <person name="Fey P."/>
            <person name="Pilcher K."/>
            <person name="Chen G."/>
            <person name="Saunders D."/>
            <person name="Sodergren E.J."/>
            <person name="Davis P."/>
            <person name="Kerhornou A."/>
            <person name="Nie X."/>
            <person name="Hall N."/>
            <person name="Anjard C."/>
            <person name="Hemphill L."/>
            <person name="Bason N."/>
            <person name="Farbrother P."/>
            <person name="Desany B."/>
            <person name="Just E."/>
            <person name="Morio T."/>
            <person name="Rost R."/>
            <person name="Churcher C.M."/>
            <person name="Cooper J."/>
            <person name="Haydock S."/>
            <person name="van Driessche N."/>
            <person name="Cronin A."/>
            <person name="Goodhead I."/>
            <person name="Muzny D.M."/>
            <person name="Mourier T."/>
            <person name="Pain A."/>
            <person name="Lu M."/>
            <person name="Harper D."/>
            <person name="Lindsay R."/>
            <person name="Hauser H."/>
            <person name="James K.D."/>
            <person name="Quiles M."/>
            <person name="Madan Babu M."/>
            <person name="Saito T."/>
            <person name="Buchrieser C."/>
            <person name="Wardroper A."/>
            <person name="Felder M."/>
            <person name="Thangavelu M."/>
            <person name="Johnson D."/>
            <person name="Knights A."/>
            <person name="Loulseged H."/>
            <person name="Mungall K.L."/>
            <person name="Oliver K."/>
            <person name="Price C."/>
            <person name="Quail M.A."/>
            <person name="Urushihara H."/>
            <person name="Hernandez J."/>
            <person name="Rabbinowitsch E."/>
            <person name="Steffen D."/>
            <person name="Sanders M."/>
            <person name="Ma J."/>
            <person name="Kohara Y."/>
            <person name="Sharp S."/>
            <person name="Simmonds M.N."/>
            <person name="Spiegler S."/>
            <person name="Tivey A."/>
            <person name="Sugano S."/>
            <person name="White B."/>
            <person name="Walker D."/>
            <person name="Woodward J.R."/>
            <person name="Winckler T."/>
            <person name="Tanaka Y."/>
            <person name="Shaulsky G."/>
            <person name="Schleicher M."/>
            <person name="Weinstock G.M."/>
            <person name="Rosenthal A."/>
            <person name="Cox E.C."/>
            <person name="Chisholm R.L."/>
            <person name="Gibbs R.A."/>
            <person name="Loomis W.F."/>
            <person name="Platzer M."/>
            <person name="Kay R.R."/>
            <person name="Williams J.G."/>
            <person name="Dear P.H."/>
            <person name="Noegel A.A."/>
            <person name="Barrell B.G."/>
            <person name="Kuspa A."/>
        </authorList>
    </citation>
    <scope>NUCLEOTIDE SEQUENCE [LARGE SCALE GENOMIC DNA]</scope>
    <source>
        <strain>AX4</strain>
    </source>
</reference>
<reference key="2">
    <citation type="journal article" date="1998" name="J. Biol. Chem.">
        <title>The biosynthesis of differentiation-inducing factor, a chlorinated signal molecule regulating Dictyostelium development.</title>
        <authorList>
            <person name="Kay R.R."/>
        </authorList>
    </citation>
    <scope>FUNCTION</scope>
</reference>
<reference key="3">
    <citation type="journal article" date="2006" name="Nat. Chem. Biol.">
        <title>Biosynthesis of Dictyostelium discoideum differentiation-inducing factor by a hybrid type I fatty acid-type III polyketide synthase.</title>
        <authorList>
            <person name="Austin M.B."/>
            <person name="Saito T."/>
            <person name="Bowman M.E."/>
            <person name="Haydock S."/>
            <person name="Kato A."/>
            <person name="Moore B.S."/>
            <person name="Kay R.R."/>
            <person name="Noel J.P."/>
        </authorList>
    </citation>
    <scope>FUNCTION</scope>
</reference>
<reference key="4">
    <citation type="journal article" date="2010" name="Proc. Natl. Acad. Sci. U.S.A.">
        <title>A flavin-dependent halogenase catalyzes the chlorination step in the biosynthesis of Dictyostelium differentiation-inducing factor 1.</title>
        <authorList>
            <person name="Neumann C.S."/>
            <person name="Walsh C.T."/>
            <person name="Kay R.R."/>
        </authorList>
    </citation>
    <scope>FUNCTION</scope>
    <scope>DISRUPTION PHENOTYPE</scope>
    <scope>CATALYTIC ACTIVITY</scope>
    <scope>MUTAGENESIS OF LYS-86</scope>
</reference>
<comment type="function">
    <text evidence="2 3 4">Flavin-dependent halogenase; part of the gene cluster that mediates the biosynthesis of DIF-1 (Differentiation Inducing Factor-1), a signal molecule involved in the differentiation of pstO (prestalk-O) cells (PubMed:20231486). The three-step process begins with the formation of (2,4,6-trihydroxyphenyl)-1-hexan-1-one (THPH) by the polyketide synthase StlB (PubMed:16906151). THPH is then dichlorinated by the flavin-dependent halogenase ChlA (PubMed:20231486). The last step of DIF-1 biosynthesis is the O-methylation of dichloro-THPH (or des-methyl-DIF-1) by the methyltransferase DmtA to yield DIF-1 (PubMed:9446571).</text>
</comment>
<comment type="catalytic activity">
    <reaction evidence="3">
        <text>2,4,6-trihydroxyphenylhexan-1-one + FADH2 + chloride + O2 = (3-chloro-2,4,6-trihydroxyphenyl)hexan-1-one + FAD + 2 H2O + H(+)</text>
        <dbReference type="Rhea" id="RHEA:64356"/>
        <dbReference type="ChEBI" id="CHEBI:15377"/>
        <dbReference type="ChEBI" id="CHEBI:15378"/>
        <dbReference type="ChEBI" id="CHEBI:15379"/>
        <dbReference type="ChEBI" id="CHEBI:17996"/>
        <dbReference type="ChEBI" id="CHEBI:57692"/>
        <dbReference type="ChEBI" id="CHEBI:58307"/>
        <dbReference type="ChEBI" id="CHEBI:150865"/>
        <dbReference type="ChEBI" id="CHEBI:152555"/>
    </reaction>
    <physiologicalReaction direction="left-to-right" evidence="3">
        <dbReference type="Rhea" id="RHEA:64357"/>
    </physiologicalReaction>
</comment>
<comment type="catalytic activity">
    <reaction evidence="3">
        <text>(3-chloro-2,4,6-trihydroxyphenyl)hexan-1-one + FADH2 + chloride + O2 = (3,5-dichloro-2,4,6-trihydroxyphenyl)hexan-1-one + FAD + 2 H2O</text>
        <dbReference type="Rhea" id="RHEA:64360"/>
        <dbReference type="ChEBI" id="CHEBI:15377"/>
        <dbReference type="ChEBI" id="CHEBI:15379"/>
        <dbReference type="ChEBI" id="CHEBI:17996"/>
        <dbReference type="ChEBI" id="CHEBI:57692"/>
        <dbReference type="ChEBI" id="CHEBI:58307"/>
        <dbReference type="ChEBI" id="CHEBI:90398"/>
        <dbReference type="ChEBI" id="CHEBI:152555"/>
    </reaction>
    <physiologicalReaction direction="left-to-right" evidence="3">
        <dbReference type="Rhea" id="RHEA:64361"/>
    </physiologicalReaction>
</comment>
<comment type="disruption phenotype">
    <text evidence="3">Impairs the production of DIF-1 and leads to deficiencies in slug structure and fruiting body formation.</text>
</comment>
<comment type="similarity">
    <text evidence="6">Belongs to the flavin-dependent halogenase family.</text>
</comment>
<feature type="chain" id="PRO_0000450882" description="Flavin-dependent halogenase chlA">
    <location>
        <begin position="1"/>
        <end position="603"/>
    </location>
</feature>
<feature type="binding site" evidence="1">
    <location>
        <position position="16"/>
    </location>
    <ligand>
        <name>FAD</name>
        <dbReference type="ChEBI" id="CHEBI:57692"/>
    </ligand>
</feature>
<feature type="binding site" evidence="1">
    <location>
        <position position="19"/>
    </location>
    <ligand>
        <name>FAD</name>
        <dbReference type="ChEBI" id="CHEBI:57692"/>
    </ligand>
</feature>
<feature type="binding site" evidence="1">
    <location>
        <position position="59"/>
    </location>
    <ligand>
        <name>FAD</name>
        <dbReference type="ChEBI" id="CHEBI:57692"/>
    </ligand>
</feature>
<feature type="binding site" evidence="1">
    <location>
        <position position="352"/>
    </location>
    <ligand>
        <name>chloride</name>
        <dbReference type="ChEBI" id="CHEBI:17996"/>
    </ligand>
</feature>
<feature type="binding site" evidence="1">
    <location>
        <position position="353"/>
    </location>
    <ligand>
        <name>chloride</name>
        <dbReference type="ChEBI" id="CHEBI:17996"/>
    </ligand>
</feature>
<feature type="mutagenesis site" description="Abolishes chlorination activity." evidence="3">
    <original>K</original>
    <variation>A</variation>
    <location>
        <position position="86"/>
    </location>
</feature>
<accession>Q54FI4</accession>
<sequence>MDTNIINHYDIIIIGGGIAGLSATRHLLLKMPELSGRIAVIEPRSERRDNLDEDYKVGESTVEVSAMFFAKELELQDYLIENHPPKFSLQFHWPRELSKTDTIEDYYSTWAVKNPDIQAFQLNRCKIERDLLKMVIAQGAVYYHGRVRNVDNLDNDDMKSIDVEILSEVESGADFKLQQSIERITLTTDYIVDASGRNFTVGSRTDNILKDPKHLFGLDNASTWVRVKNTERSLFDFKSQDVTCSWTYDTNHFFGPGYWIWMIPLERGSRDYSIGVSYHRDKIQPSQLNSLDKFMSFLEKNQKLLYNLIKSGEIVDFHRWPKLAHTSKTFFSKNNWCVIGDAAAIFDPFYSTGMVMIAMEIECLTEMLKFKLSNAANDYHRRVEAFDKLIRCVTQINNHLIKDHSNHLGNASIMSWRIYFESSTYFSILLPAYIGKYHLCPIFSDHFTTDHENGLALRNQLLATLDYANENSINIGFMDNHRGGQLLGDWSPTSSWDYDHALSLAKYGHKRLNLPKCLSWSNFYLSLIICKLYYRVYGIGALWNSSFFKSLSNTTYRFSKFYFLSKLHSFNMIGTPNNDYYDKIQKDFKSYNYNQNNIVDWKY</sequence>
<dbReference type="EC" id="1.14.14.-" evidence="3"/>
<dbReference type="EMBL" id="AAFI01000244">
    <property type="protein sequence ID" value="EAL62046.1"/>
    <property type="molecule type" value="Genomic_DNA"/>
</dbReference>
<dbReference type="RefSeq" id="XP_635556.1">
    <property type="nucleotide sequence ID" value="XM_630464.1"/>
</dbReference>
<dbReference type="SMR" id="Q54FI4"/>
<dbReference type="STRING" id="44689.Q54FI4"/>
<dbReference type="PaxDb" id="44689-DDB0189108"/>
<dbReference type="KEGG" id="ddi:DDB_G0290825"/>
<dbReference type="dictyBase" id="DDB_G0290825">
    <property type="gene designation" value="chlA"/>
</dbReference>
<dbReference type="VEuPathDB" id="AmoebaDB:DDB_G0290825"/>
<dbReference type="eggNOG" id="ENOG502SW7V">
    <property type="taxonomic scope" value="Eukaryota"/>
</dbReference>
<dbReference type="HOGENOM" id="CLU_449585_0_0_1"/>
<dbReference type="OMA" id="ANAVWWR"/>
<dbReference type="PRO" id="PR:Q54FI4"/>
<dbReference type="GO" id="GO:0140907">
    <property type="term" value="F:flavin-dependent halogenase activity"/>
    <property type="evidence" value="ECO:0000314"/>
    <property type="project" value="dictyBase"/>
</dbReference>
<dbReference type="GO" id="GO:0004497">
    <property type="term" value="F:monooxygenase activity"/>
    <property type="evidence" value="ECO:0007669"/>
    <property type="project" value="UniProtKB-KW"/>
</dbReference>
<dbReference type="GO" id="GO:0031154">
    <property type="term" value="P:culmination involved in sorocarp development"/>
    <property type="evidence" value="ECO:0000315"/>
    <property type="project" value="dictyBase"/>
</dbReference>
<dbReference type="GO" id="GO:0018893">
    <property type="term" value="P:dibenzofuran metabolic process"/>
    <property type="evidence" value="ECO:0000315"/>
    <property type="project" value="dictyBase"/>
</dbReference>
<dbReference type="GO" id="GO:0031148">
    <property type="term" value="P:DIF-1 biosynthetic process"/>
    <property type="evidence" value="ECO:0000315"/>
    <property type="project" value="dictyBase"/>
</dbReference>
<dbReference type="GO" id="GO:0031153">
    <property type="term" value="P:slug development involved in sorocarp development"/>
    <property type="evidence" value="ECO:0000315"/>
    <property type="project" value="dictyBase"/>
</dbReference>
<dbReference type="GO" id="GO:0030587">
    <property type="term" value="P:sorocarp development"/>
    <property type="evidence" value="ECO:0007001"/>
    <property type="project" value="dictyBase"/>
</dbReference>
<dbReference type="FunFam" id="3.50.50.60:FF:000860">
    <property type="entry name" value="Uncharacterized protein"/>
    <property type="match status" value="1"/>
</dbReference>
<dbReference type="Gene3D" id="3.50.50.60">
    <property type="entry name" value="FAD/NAD(P)-binding domain"/>
    <property type="match status" value="1"/>
</dbReference>
<dbReference type="InterPro" id="IPR036188">
    <property type="entry name" value="FAD/NAD-bd_sf"/>
</dbReference>
<dbReference type="InterPro" id="IPR050816">
    <property type="entry name" value="Flavin-dep_Halogenase_NPB"/>
</dbReference>
<dbReference type="InterPro" id="IPR006905">
    <property type="entry name" value="Flavin_halogenase"/>
</dbReference>
<dbReference type="PANTHER" id="PTHR43747:SF5">
    <property type="entry name" value="FAD-BINDING DOMAIN-CONTAINING PROTEIN"/>
    <property type="match status" value="1"/>
</dbReference>
<dbReference type="PANTHER" id="PTHR43747">
    <property type="entry name" value="FAD-BINDING PROTEIN"/>
    <property type="match status" value="1"/>
</dbReference>
<dbReference type="Pfam" id="PF04820">
    <property type="entry name" value="Trp_halogenase"/>
    <property type="match status" value="1"/>
</dbReference>
<dbReference type="SUPFAM" id="SSF51905">
    <property type="entry name" value="FAD/NAD(P)-binding domain"/>
    <property type="match status" value="1"/>
</dbReference>
<name>CHLA_DICDI</name>
<gene>
    <name evidence="5" type="primary">ChlA</name>
    <name evidence="7" type="ORF">DDB0189108</name>
</gene>
<organism>
    <name type="scientific">Dictyostelium discoideum</name>
    <name type="common">Social amoeba</name>
    <dbReference type="NCBI Taxonomy" id="44689"/>
    <lineage>
        <taxon>Eukaryota</taxon>
        <taxon>Amoebozoa</taxon>
        <taxon>Evosea</taxon>
        <taxon>Eumycetozoa</taxon>
        <taxon>Dictyostelia</taxon>
        <taxon>Dictyosteliales</taxon>
        <taxon>Dictyosteliaceae</taxon>
        <taxon>Dictyostelium</taxon>
    </lineage>
</organism>